<comment type="function">
    <text evidence="1 2">Sequence-specific RNA-binding protein that acts as a post-transcriptional repressor by binding the 3'-UTR of mRNA targets. Binds to an RNA consensus sequence, the Pumilio Response Element (PRE), 5'-UGUANAUA-3', that is related to the Nanos Response Element (NRE). Mediates post-transcriptional repression of transcripts via different mechanisms: acts via direct recruitment of the CCR4-POP2-NOT deadenylase leading to translational inhibition and mRNA degradation. Also mediates deadenylation-independent repression by promoting accessibility of miRNAs.</text>
</comment>
<comment type="subcellular location">
    <subcellularLocation>
        <location evidence="1">Cytoplasm</location>
    </subcellularLocation>
    <subcellularLocation>
        <location evidence="1">Cytoplasm</location>
        <location evidence="1">P-body</location>
    </subcellularLocation>
    <subcellularLocation>
        <location evidence="1">Cytoplasmic granule</location>
    </subcellularLocation>
</comment>
<comment type="alternative products">
    <event type="alternative splicing"/>
    <isoform>
        <id>Q2VB19-1</id>
        <name>1</name>
        <sequence type="displayed"/>
    </isoform>
    <isoform>
        <id>Q2VB19-2</id>
        <name>2</name>
        <sequence type="described" ref="VSP_029839"/>
    </isoform>
</comment>
<comment type="tissue specificity">
    <text evidence="5">Detected in embryonic male and female gonads, heart, liver and muscle. Detected in adult brain, testis, ovary, heart, lung, spleen, kidney and muscle.</text>
</comment>
<comment type="domain">
    <text evidence="1">The pumilio repeats mediate the association with RNA by packing together to form a right-handed superhelix that approximates a half donut. RNA-binding occurs on the concave side of the surface. PUM1 is composed of 8 pumilio repeats of 36 residues; each repeat binds a single nucleotide in its RNA target. Residues at positions 12 and 16 of the pumilio repeat bind each RNA base via hydrogen bonding or van der Waals contacts with the Watson-Crick edge, while the amino acid at position 13 makes a stacking interaction. The recognition of RNA by pumilio repeats is base specific: cysteine and glutamine at position 12 and 16, respectively, bind adenine; asparagine and glutamine bind uracil; and serine and glutamate bind guanine.</text>
</comment>
<reference key="1">
    <citation type="journal article" date="2008" name="Mol. Reprod. Dev.">
        <title>Identification and gene expression profiling of the Pum1 and Pum2 members of the Pumilio family in the chicken.</title>
        <authorList>
            <person name="Lee J.Y."/>
            <person name="Lim J.M."/>
            <person name="Kim D.K."/>
            <person name="Zheng Y.H."/>
            <person name="Moon S."/>
            <person name="Han B.K."/>
            <person name="Song K.D."/>
            <person name="Kim H."/>
            <person name="Han J.Y."/>
        </authorList>
    </citation>
    <scope>NUCLEOTIDE SEQUENCE [MRNA] (ISOFORM 1)</scope>
    <scope>TISSUE SPECIFICITY</scope>
    <source>
        <strain>White leghorn</strain>
        <tissue>Testis</tissue>
    </source>
</reference>
<reference key="2">
    <citation type="journal article" date="2005" name="Genome Biol.">
        <title>Full-length cDNAs from chicken bursal lymphocytes to facilitate gene function analysis.</title>
        <authorList>
            <person name="Caldwell R.B."/>
            <person name="Kierzek A.M."/>
            <person name="Arakawa H."/>
            <person name="Bezzubov Y."/>
            <person name="Zaim J."/>
            <person name="Fiedler P."/>
            <person name="Kutter S."/>
            <person name="Blagodatski A."/>
            <person name="Kostovska D."/>
            <person name="Koter M."/>
            <person name="Plachy J."/>
            <person name="Carninci P."/>
            <person name="Hayashizaki Y."/>
            <person name="Buerstedde J.-M."/>
        </authorList>
    </citation>
    <scope>NUCLEOTIDE SEQUENCE [LARGE SCALE MRNA] (ISOFORM 2)</scope>
    <source>
        <strain>CB</strain>
        <tissue>Bursa of Fabricius</tissue>
    </source>
</reference>
<keyword id="KW-0025">Alternative splicing</keyword>
<keyword id="KW-0963">Cytoplasm</keyword>
<keyword id="KW-1185">Reference proteome</keyword>
<keyword id="KW-0677">Repeat</keyword>
<keyword id="KW-0694">RNA-binding</keyword>
<keyword id="KW-0810">Translation regulation</keyword>
<dbReference type="EMBL" id="DQ275191">
    <property type="protein sequence ID" value="ABB83588.1"/>
    <property type="molecule type" value="mRNA"/>
</dbReference>
<dbReference type="EMBL" id="AJ851393">
    <property type="protein sequence ID" value="CAH65027.1"/>
    <property type="molecule type" value="mRNA"/>
</dbReference>
<dbReference type="RefSeq" id="NP_001012858.2">
    <molecule id="Q2VB19-2"/>
    <property type="nucleotide sequence ID" value="NM_001012840.3"/>
</dbReference>
<dbReference type="RefSeq" id="XP_015153021.1">
    <molecule id="Q2VB19-1"/>
    <property type="nucleotide sequence ID" value="XM_015297535.4"/>
</dbReference>
<dbReference type="RefSeq" id="XP_046787880.1">
    <molecule id="Q2VB19-1"/>
    <property type="nucleotide sequence ID" value="XM_046931924.1"/>
</dbReference>
<dbReference type="SMR" id="Q2VB19"/>
<dbReference type="FunCoup" id="Q2VB19">
    <property type="interactions" value="2938"/>
</dbReference>
<dbReference type="STRING" id="9031.ENSGALP00000055364"/>
<dbReference type="GlyGen" id="Q2VB19">
    <property type="glycosylation" value="1 site"/>
</dbReference>
<dbReference type="PaxDb" id="9031-ENSGALP00000000832"/>
<dbReference type="Ensembl" id="ENSGALT00010032397.1">
    <molecule id="Q2VB19-2"/>
    <property type="protein sequence ID" value="ENSGALP00010019164.1"/>
    <property type="gene ID" value="ENSGALG00010013453.1"/>
</dbReference>
<dbReference type="GeneID" id="419554"/>
<dbReference type="KEGG" id="gga:419554"/>
<dbReference type="CTD" id="9698"/>
<dbReference type="VEuPathDB" id="HostDB:geneid_419554"/>
<dbReference type="eggNOG" id="KOG1488">
    <property type="taxonomic scope" value="Eukaryota"/>
</dbReference>
<dbReference type="GeneTree" id="ENSGT00940000158079"/>
<dbReference type="HOGENOM" id="CLU_004017_0_0_1"/>
<dbReference type="InParanoid" id="Q2VB19"/>
<dbReference type="OrthoDB" id="668540at2759"/>
<dbReference type="PhylomeDB" id="Q2VB19"/>
<dbReference type="TreeFam" id="TF318160"/>
<dbReference type="Reactome" id="R-GGA-432722">
    <property type="pathway name" value="Golgi Associated Vesicle Biogenesis"/>
</dbReference>
<dbReference type="PRO" id="PR:Q2VB19"/>
<dbReference type="Proteomes" id="UP000000539">
    <property type="component" value="Chromosome 23"/>
</dbReference>
<dbReference type="Bgee" id="ENSGALG00000042598">
    <property type="expression patterns" value="Expressed in colon and 13 other cell types or tissues"/>
</dbReference>
<dbReference type="GO" id="GO:0005737">
    <property type="term" value="C:cytoplasm"/>
    <property type="evidence" value="ECO:0000250"/>
    <property type="project" value="UniProtKB"/>
</dbReference>
<dbReference type="GO" id="GO:0005829">
    <property type="term" value="C:cytosol"/>
    <property type="evidence" value="ECO:0000318"/>
    <property type="project" value="GO_Central"/>
</dbReference>
<dbReference type="GO" id="GO:0000932">
    <property type="term" value="C:P-body"/>
    <property type="evidence" value="ECO:0000250"/>
    <property type="project" value="UniProtKB"/>
</dbReference>
<dbReference type="GO" id="GO:0003730">
    <property type="term" value="F:mRNA 3'-UTR binding"/>
    <property type="evidence" value="ECO:0000250"/>
    <property type="project" value="UniProtKB"/>
</dbReference>
<dbReference type="GO" id="GO:0008344">
    <property type="term" value="P:adult locomotory behavior"/>
    <property type="evidence" value="ECO:0000250"/>
    <property type="project" value="UniProtKB"/>
</dbReference>
<dbReference type="GO" id="GO:0035196">
    <property type="term" value="P:miRNA processing"/>
    <property type="evidence" value="ECO:0000318"/>
    <property type="project" value="GO_Central"/>
</dbReference>
<dbReference type="GO" id="GO:0061157">
    <property type="term" value="P:mRNA destabilization"/>
    <property type="evidence" value="ECO:0000250"/>
    <property type="project" value="UniProtKB"/>
</dbReference>
<dbReference type="GO" id="GO:2000637">
    <property type="term" value="P:positive regulation of miRNA-mediated gene silencing"/>
    <property type="evidence" value="ECO:0000250"/>
    <property type="project" value="UniProtKB"/>
</dbReference>
<dbReference type="GO" id="GO:0016441">
    <property type="term" value="P:post-transcriptional gene silencing"/>
    <property type="evidence" value="ECO:0000250"/>
    <property type="project" value="UniProtKB"/>
</dbReference>
<dbReference type="GO" id="GO:0051726">
    <property type="term" value="P:regulation of cell cycle"/>
    <property type="evidence" value="ECO:0000250"/>
    <property type="project" value="UniProtKB"/>
</dbReference>
<dbReference type="GO" id="GO:0043488">
    <property type="term" value="P:regulation of mRNA stability"/>
    <property type="evidence" value="ECO:0000318"/>
    <property type="project" value="GO_Central"/>
</dbReference>
<dbReference type="GO" id="GO:0006417">
    <property type="term" value="P:regulation of translation"/>
    <property type="evidence" value="ECO:0007669"/>
    <property type="project" value="UniProtKB-KW"/>
</dbReference>
<dbReference type="GO" id="GO:0007283">
    <property type="term" value="P:spermatogenesis"/>
    <property type="evidence" value="ECO:0000250"/>
    <property type="project" value="UniProtKB"/>
</dbReference>
<dbReference type="GO" id="GO:0048863">
    <property type="term" value="P:stem cell differentiation"/>
    <property type="evidence" value="ECO:0000250"/>
    <property type="project" value="UniProtKB"/>
</dbReference>
<dbReference type="CDD" id="cd07920">
    <property type="entry name" value="Pumilio"/>
    <property type="match status" value="1"/>
</dbReference>
<dbReference type="FunFam" id="1.25.10.10:FF:000004">
    <property type="entry name" value="Pumilio homolog 1 isoform 2"/>
    <property type="match status" value="1"/>
</dbReference>
<dbReference type="Gene3D" id="1.25.10.10">
    <property type="entry name" value="Leucine-rich Repeat Variant"/>
    <property type="match status" value="1"/>
</dbReference>
<dbReference type="InterPro" id="IPR011989">
    <property type="entry name" value="ARM-like"/>
</dbReference>
<dbReference type="InterPro" id="IPR016024">
    <property type="entry name" value="ARM-type_fold"/>
</dbReference>
<dbReference type="InterPro" id="IPR033133">
    <property type="entry name" value="PUM-HD"/>
</dbReference>
<dbReference type="InterPro" id="IPR033712">
    <property type="entry name" value="Pumilio_RNA-bd"/>
</dbReference>
<dbReference type="InterPro" id="IPR001313">
    <property type="entry name" value="Pumilio_RNA-bd_rpt"/>
</dbReference>
<dbReference type="PANTHER" id="PTHR12537:SF1">
    <property type="entry name" value="PUMILIO HOMOLOG 1"/>
    <property type="match status" value="1"/>
</dbReference>
<dbReference type="PANTHER" id="PTHR12537">
    <property type="entry name" value="RNA BINDING PROTEIN PUMILIO-RELATED"/>
    <property type="match status" value="1"/>
</dbReference>
<dbReference type="Pfam" id="PF00806">
    <property type="entry name" value="PUF"/>
    <property type="match status" value="8"/>
</dbReference>
<dbReference type="SMART" id="SM00025">
    <property type="entry name" value="Pumilio"/>
    <property type="match status" value="8"/>
</dbReference>
<dbReference type="SUPFAM" id="SSF48371">
    <property type="entry name" value="ARM repeat"/>
    <property type="match status" value="1"/>
</dbReference>
<dbReference type="PROSITE" id="PS50302">
    <property type="entry name" value="PUM"/>
    <property type="match status" value="8"/>
</dbReference>
<dbReference type="PROSITE" id="PS50303">
    <property type="entry name" value="PUM_HD"/>
    <property type="match status" value="1"/>
</dbReference>
<protein>
    <recommendedName>
        <fullName evidence="7">Pumilio homolog 1</fullName>
    </recommendedName>
</protein>
<organism>
    <name type="scientific">Gallus gallus</name>
    <name type="common">Chicken</name>
    <dbReference type="NCBI Taxonomy" id="9031"/>
    <lineage>
        <taxon>Eukaryota</taxon>
        <taxon>Metazoa</taxon>
        <taxon>Chordata</taxon>
        <taxon>Craniata</taxon>
        <taxon>Vertebrata</taxon>
        <taxon>Euteleostomi</taxon>
        <taxon>Archelosauria</taxon>
        <taxon>Archosauria</taxon>
        <taxon>Dinosauria</taxon>
        <taxon>Saurischia</taxon>
        <taxon>Theropoda</taxon>
        <taxon>Coelurosauria</taxon>
        <taxon>Aves</taxon>
        <taxon>Neognathae</taxon>
        <taxon>Galloanserae</taxon>
        <taxon>Galliformes</taxon>
        <taxon>Phasianidae</taxon>
        <taxon>Phasianinae</taxon>
        <taxon>Gallus</taxon>
    </lineage>
</organism>
<accession>Q2VB19</accession>
<accession>Q5F4A7</accession>
<evidence type="ECO:0000250" key="1">
    <source>
        <dbReference type="UniProtKB" id="Q14671"/>
    </source>
</evidence>
<evidence type="ECO:0000250" key="2">
    <source>
        <dbReference type="UniProtKB" id="Q80U78"/>
    </source>
</evidence>
<evidence type="ECO:0000255" key="3">
    <source>
        <dbReference type="PROSITE-ProRule" id="PRU00318"/>
    </source>
</evidence>
<evidence type="ECO:0000256" key="4">
    <source>
        <dbReference type="SAM" id="MobiDB-lite"/>
    </source>
</evidence>
<evidence type="ECO:0000269" key="5">
    <source>
    </source>
</evidence>
<evidence type="ECO:0000303" key="6">
    <source>
    </source>
</evidence>
<evidence type="ECO:0000305" key="7"/>
<proteinExistence type="evidence at transcript level"/>
<gene>
    <name type="primary">PUM1</name>
    <name evidence="6" type="ORF">RCJMB04_1f11</name>
</gene>
<sequence length="1189" mass="126677">MSVACVLKRKAVLWQDSFSPHLKQHAQDTANPNMPVVLTSGTGSQAQPQPAANQALAAGTHSSPVPGSIGVAGRSQDDAMVDYFFQRQHGEQLGGGGSGGGGYNNSKHRWPTGDNIHAEHQVRSMDELNHDFQALALEGRAMGEQLLPGKKFWESDDSSKDGPKGIFLGDQWRDSAWGTSDHSVSQPIMVQRRPGQGFHVNSEVNSVLSPRSESGGLGVSMVEYVLSSSPGDSCLRKGGFGPRDAENDENDKGDKKNKGTFDGDKLGDLKEEGDVMDKTNGLPVQNGIDTDVKDFSRTPGNCQNSASEVDLLGPNQNGSEGLAQLASTNGAKPVEDFSNIESQSVPLDPMEHVGMEPLQFDYSGTQVPVDSAAATVGLFDYNSQQQLFQRPNALAVQQLTAAQQQQYALAAAHQPHIAGLAPAAFVPNPYIISAAPPGTDPYAAGLAAAATLGPAVVPHQYYGVTPWGVYPASLFQQQAAAAAAATNSANQQTTQQTQQGQQQVLRGGASQRPLTPNQNQQGQQTDPLVAAAAVNSALAFGQGLAAGMPGYPVLAPAAYYDQTGALVVNAGARNGLGAPVRLVAPAPVIISSSAAQAAVAAAAASANGAAGGLAGTTNGPFRPLGTQQPQPQPQQQPTNNLASSSFYGNNSLSSNSQSSSLFSQGSAQPANTSLGFGSSSSLGATLGSALGGFGTAVANSNTGSGSRRDSLTGSSDLYKRTSSSLTPIGHSFYNGLGFSSSPGPVGMPLPSQGPGHSQTPPPSLSSHGSSSSLNLGGLTNGSGRYISAAPGAEAKYRSASSASSLFSPSSTLFPSSRLRYGMSDVMPSGRSRLLEDFRNNRYPNLQLREIAGHIMEFSQDQHGSRFIQLKLERATPAERQLVFNEILQAAYQLMVDVFGNYVIQKFFEFGSLEQKLALAERIRGHVLSLALQMYGCRVIQKALEFIPPDQQVINEMVRELDGHVLKCVKDQNGNHVVQKCIECVQPQSLQFIIDAFKGQVFALSTHPYGCRVIQRILEHCLPEQTLPILEELHQHTEQLVQDQYGNYVIQHVLEHGRPEDKSKIVAEIRGNVLVLSQHKFASNVVEKCVTHASRTERAMLIDEVCTMNDGPHSALYTMMKDQYANYVVQKMIDVAEPAQRKIVMHKIRPHIATLRKYTYGKHILAKLEKYYMKNGVDLGPICGPPNGII</sequence>
<name>PUM1_CHICK</name>
<feature type="chain" id="PRO_0000312356" description="Pumilio homolog 1">
    <location>
        <begin position="1"/>
        <end position="1189"/>
    </location>
</feature>
<feature type="domain" description="PUM-HD" evidence="3">
    <location>
        <begin position="829"/>
        <end position="1171"/>
    </location>
</feature>
<feature type="repeat" description="Pumilio 1">
    <location>
        <begin position="849"/>
        <end position="884"/>
    </location>
</feature>
<feature type="repeat" description="Pumilio 2">
    <location>
        <begin position="885"/>
        <end position="920"/>
    </location>
</feature>
<feature type="repeat" description="Pumilio 3">
    <location>
        <begin position="921"/>
        <end position="958"/>
    </location>
</feature>
<feature type="repeat" description="Pumilio 4">
    <location>
        <begin position="959"/>
        <end position="994"/>
    </location>
</feature>
<feature type="repeat" description="Pumilio 5">
    <location>
        <begin position="995"/>
        <end position="1030"/>
    </location>
</feature>
<feature type="repeat" description="Pumilio 6">
    <location>
        <begin position="1031"/>
        <end position="1066"/>
    </location>
</feature>
<feature type="repeat" description="Pumilio 7">
    <location>
        <begin position="1067"/>
        <end position="1102"/>
    </location>
</feature>
<feature type="repeat" description="Pumilio 8">
    <location>
        <begin position="1106"/>
        <end position="1145"/>
    </location>
</feature>
<feature type="region of interest" description="Disordered" evidence="4">
    <location>
        <begin position="24"/>
        <end position="65"/>
    </location>
</feature>
<feature type="region of interest" description="Disordered" evidence="4">
    <location>
        <begin position="233"/>
        <end position="288"/>
    </location>
</feature>
<feature type="region of interest" description="Disordered" evidence="4">
    <location>
        <begin position="491"/>
        <end position="525"/>
    </location>
</feature>
<feature type="region of interest" description="Disordered" evidence="4">
    <location>
        <begin position="614"/>
        <end position="652"/>
    </location>
</feature>
<feature type="region of interest" description="Disordered" evidence="4">
    <location>
        <begin position="743"/>
        <end position="774"/>
    </location>
</feature>
<feature type="region of interest" description="Adenine-nucleotide binding in RNA target" evidence="1">
    <location>
        <begin position="864"/>
        <end position="868"/>
    </location>
</feature>
<feature type="region of interest" description="Uracil-nucleotide binding in RNA target" evidence="1">
    <location>
        <begin position="900"/>
        <end position="904"/>
    </location>
</feature>
<feature type="region of interest" description="Adenine-nucleotide binding in RNA target" evidence="1">
    <location>
        <begin position="936"/>
        <end position="940"/>
    </location>
</feature>
<feature type="region of interest" description="Non-specific-nucleotide binding in RNA target" evidence="1">
    <location>
        <begin position="974"/>
        <end position="978"/>
    </location>
</feature>
<feature type="region of interest" description="Adenine-nucleotide binding in RNA target" evidence="1">
    <location>
        <begin position="1010"/>
        <end position="1014"/>
    </location>
</feature>
<feature type="region of interest" description="Uracil-nucleotide binding in RNA target" evidence="1">
    <location>
        <begin position="1046"/>
        <end position="1050"/>
    </location>
</feature>
<feature type="region of interest" description="Guanine-nucleotide binding in RNA target" evidence="1">
    <location>
        <begin position="1082"/>
        <end position="1086"/>
    </location>
</feature>
<feature type="region of interest" description="Guanine-nucleotide binding in RNA target" evidence="1">
    <location>
        <begin position="1083"/>
        <end position="1086"/>
    </location>
</feature>
<feature type="region of interest" description="Uracil-nucleotide binding in RNA target" evidence="1">
    <location>
        <begin position="1125"/>
        <end position="1129"/>
    </location>
</feature>
<feature type="compositionally biased region" description="Low complexity" evidence="4">
    <location>
        <begin position="45"/>
        <end position="58"/>
    </location>
</feature>
<feature type="compositionally biased region" description="Basic and acidic residues" evidence="4">
    <location>
        <begin position="250"/>
        <end position="277"/>
    </location>
</feature>
<feature type="compositionally biased region" description="Low complexity" evidence="4">
    <location>
        <begin position="491"/>
        <end position="503"/>
    </location>
</feature>
<feature type="compositionally biased region" description="Polar residues" evidence="4">
    <location>
        <begin position="512"/>
        <end position="525"/>
    </location>
</feature>
<feature type="compositionally biased region" description="Low complexity" evidence="4">
    <location>
        <begin position="627"/>
        <end position="652"/>
    </location>
</feature>
<feature type="compositionally biased region" description="Low complexity" evidence="4">
    <location>
        <begin position="764"/>
        <end position="774"/>
    </location>
</feature>
<feature type="splice variant" id="VSP_029839" description="In isoform 2." evidence="6">
    <location>
        <begin position="145"/>
        <end position="240"/>
    </location>
</feature>
<feature type="sequence conflict" description="In Ref. 2; CAH65027." evidence="7" ref="2">
    <original>K</original>
    <variation>E</variation>
    <location>
        <position position="719"/>
    </location>
</feature>